<gene>
    <name evidence="1" type="primary">erpA</name>
    <name type="ordered locus">ECP_0166</name>
</gene>
<organism>
    <name type="scientific">Escherichia coli O6:K15:H31 (strain 536 / UPEC)</name>
    <dbReference type="NCBI Taxonomy" id="362663"/>
    <lineage>
        <taxon>Bacteria</taxon>
        <taxon>Pseudomonadati</taxon>
        <taxon>Pseudomonadota</taxon>
        <taxon>Gammaproteobacteria</taxon>
        <taxon>Enterobacterales</taxon>
        <taxon>Enterobacteriaceae</taxon>
        <taxon>Escherichia</taxon>
    </lineage>
</organism>
<evidence type="ECO:0000255" key="1">
    <source>
        <dbReference type="HAMAP-Rule" id="MF_01380"/>
    </source>
</evidence>
<proteinExistence type="inferred from homology"/>
<keyword id="KW-0408">Iron</keyword>
<keyword id="KW-0411">Iron-sulfur</keyword>
<keyword id="KW-0479">Metal-binding</keyword>
<feature type="chain" id="PRO_0000311480" description="Iron-sulfur cluster insertion protein ErpA">
    <location>
        <begin position="1"/>
        <end position="114"/>
    </location>
</feature>
<feature type="binding site" evidence="1">
    <location>
        <position position="42"/>
    </location>
    <ligand>
        <name>iron-sulfur cluster</name>
        <dbReference type="ChEBI" id="CHEBI:30408"/>
    </ligand>
</feature>
<feature type="binding site" evidence="1">
    <location>
        <position position="106"/>
    </location>
    <ligand>
        <name>iron-sulfur cluster</name>
        <dbReference type="ChEBI" id="CHEBI:30408"/>
    </ligand>
</feature>
<feature type="binding site" evidence="1">
    <location>
        <position position="108"/>
    </location>
    <ligand>
        <name>iron-sulfur cluster</name>
        <dbReference type="ChEBI" id="CHEBI:30408"/>
    </ligand>
</feature>
<comment type="function">
    <text evidence="1">Required for insertion of 4Fe-4S clusters for at least IspG.</text>
</comment>
<comment type="cofactor">
    <cofactor evidence="1">
        <name>iron-sulfur cluster</name>
        <dbReference type="ChEBI" id="CHEBI:30408"/>
    </cofactor>
    <text evidence="1">Binds 1 iron-sulfur cluster per subunit.</text>
</comment>
<comment type="subunit">
    <text evidence="1">Homodimer.</text>
</comment>
<comment type="similarity">
    <text evidence="1">Belongs to the HesB/IscA family.</text>
</comment>
<protein>
    <recommendedName>
        <fullName evidence="1">Iron-sulfur cluster insertion protein ErpA</fullName>
    </recommendedName>
</protein>
<accession>Q0TLH5</accession>
<name>ERPA_ECOL5</name>
<sequence length="114" mass="12100">MSDDVALPLEFTDAAANKVKSLIADEDNPNLKLRVYITGGGCSGFQYGFTFDDQVNEGDMTIEKQGVGLVVDPMSLQYLVGGSVDYTEGLEGSRFIVTNPNAKSTCGCGSSFSI</sequence>
<dbReference type="EMBL" id="CP000247">
    <property type="protein sequence ID" value="ABG68206.1"/>
    <property type="molecule type" value="Genomic_DNA"/>
</dbReference>
<dbReference type="RefSeq" id="WP_001295564.1">
    <property type="nucleotide sequence ID" value="NC_008253.1"/>
</dbReference>
<dbReference type="SMR" id="Q0TLH5"/>
<dbReference type="GeneID" id="93777270"/>
<dbReference type="KEGG" id="ecp:ECP_0166"/>
<dbReference type="HOGENOM" id="CLU_069054_5_3_6"/>
<dbReference type="Proteomes" id="UP000009182">
    <property type="component" value="Chromosome"/>
</dbReference>
<dbReference type="GO" id="GO:0005829">
    <property type="term" value="C:cytosol"/>
    <property type="evidence" value="ECO:0007669"/>
    <property type="project" value="TreeGrafter"/>
</dbReference>
<dbReference type="GO" id="GO:0051537">
    <property type="term" value="F:2 iron, 2 sulfur cluster binding"/>
    <property type="evidence" value="ECO:0007669"/>
    <property type="project" value="TreeGrafter"/>
</dbReference>
<dbReference type="GO" id="GO:0051539">
    <property type="term" value="F:4 iron, 4 sulfur cluster binding"/>
    <property type="evidence" value="ECO:0007669"/>
    <property type="project" value="TreeGrafter"/>
</dbReference>
<dbReference type="GO" id="GO:0005506">
    <property type="term" value="F:iron ion binding"/>
    <property type="evidence" value="ECO:0007669"/>
    <property type="project" value="UniProtKB-UniRule"/>
</dbReference>
<dbReference type="GO" id="GO:0016226">
    <property type="term" value="P:iron-sulfur cluster assembly"/>
    <property type="evidence" value="ECO:0007669"/>
    <property type="project" value="UniProtKB-UniRule"/>
</dbReference>
<dbReference type="FunFam" id="2.60.300.12:FF:000002">
    <property type="entry name" value="Iron-sulfur cluster insertion protein ErpA"/>
    <property type="match status" value="1"/>
</dbReference>
<dbReference type="Gene3D" id="2.60.300.12">
    <property type="entry name" value="HesB-like domain"/>
    <property type="match status" value="1"/>
</dbReference>
<dbReference type="HAMAP" id="MF_01380">
    <property type="entry name" value="Fe_S_insert_ErpA"/>
    <property type="match status" value="1"/>
</dbReference>
<dbReference type="InterPro" id="IPR000361">
    <property type="entry name" value="FeS_biogenesis"/>
</dbReference>
<dbReference type="InterPro" id="IPR016092">
    <property type="entry name" value="FeS_cluster_insertion"/>
</dbReference>
<dbReference type="InterPro" id="IPR017870">
    <property type="entry name" value="FeS_cluster_insertion_CS"/>
</dbReference>
<dbReference type="InterPro" id="IPR023063">
    <property type="entry name" value="FeS_cluster_insertion_RrpA"/>
</dbReference>
<dbReference type="InterPro" id="IPR035903">
    <property type="entry name" value="HesB-like_dom_sf"/>
</dbReference>
<dbReference type="NCBIfam" id="TIGR00049">
    <property type="entry name" value="iron-sulfur cluster assembly accessory protein"/>
    <property type="match status" value="1"/>
</dbReference>
<dbReference type="NCBIfam" id="NF010147">
    <property type="entry name" value="PRK13623.1"/>
    <property type="match status" value="1"/>
</dbReference>
<dbReference type="PANTHER" id="PTHR43011">
    <property type="entry name" value="IRON-SULFUR CLUSTER ASSEMBLY 2 HOMOLOG, MITOCHONDRIAL"/>
    <property type="match status" value="1"/>
</dbReference>
<dbReference type="PANTHER" id="PTHR43011:SF1">
    <property type="entry name" value="IRON-SULFUR CLUSTER ASSEMBLY 2 HOMOLOG, MITOCHONDRIAL"/>
    <property type="match status" value="1"/>
</dbReference>
<dbReference type="Pfam" id="PF01521">
    <property type="entry name" value="Fe-S_biosyn"/>
    <property type="match status" value="1"/>
</dbReference>
<dbReference type="SUPFAM" id="SSF89360">
    <property type="entry name" value="HesB-like domain"/>
    <property type="match status" value="1"/>
</dbReference>
<dbReference type="PROSITE" id="PS01152">
    <property type="entry name" value="HESB"/>
    <property type="match status" value="1"/>
</dbReference>
<reference key="1">
    <citation type="journal article" date="2006" name="Mol. Microbiol.">
        <title>Role of pathogenicity island-associated integrases in the genome plasticity of uropathogenic Escherichia coli strain 536.</title>
        <authorList>
            <person name="Hochhut B."/>
            <person name="Wilde C."/>
            <person name="Balling G."/>
            <person name="Middendorf B."/>
            <person name="Dobrindt U."/>
            <person name="Brzuszkiewicz E."/>
            <person name="Gottschalk G."/>
            <person name="Carniel E."/>
            <person name="Hacker J."/>
        </authorList>
    </citation>
    <scope>NUCLEOTIDE SEQUENCE [LARGE SCALE GENOMIC DNA]</scope>
    <source>
        <strain>536 / UPEC</strain>
    </source>
</reference>